<comment type="function">
    <text evidence="1">Part of the ABC transporter complex LolCDE involved in the translocation of mature outer membrane-directed lipoproteins, from the inner membrane to the periplasmic chaperone, LolA. Responsible for the formation of the LolA-lipoprotein complex in an ATP-dependent manner.</text>
</comment>
<comment type="subunit">
    <text evidence="1">The complex is composed of two ATP-binding proteins (LolD) and two transmembrane proteins (LolC and LolE).</text>
</comment>
<comment type="subcellular location">
    <subcellularLocation>
        <location evidence="1">Cell inner membrane</location>
        <topology evidence="1">Peripheral membrane protein</topology>
    </subcellularLocation>
</comment>
<comment type="similarity">
    <text evidence="1">Belongs to the ABC transporter superfamily. Lipoprotein translocase (TC 3.A.1.125) family.</text>
</comment>
<organism>
    <name type="scientific">Vibrio cholerae serotype O1 (strain ATCC 39315 / El Tor Inaba N16961)</name>
    <dbReference type="NCBI Taxonomy" id="243277"/>
    <lineage>
        <taxon>Bacteria</taxon>
        <taxon>Pseudomonadati</taxon>
        <taxon>Pseudomonadota</taxon>
        <taxon>Gammaproteobacteria</taxon>
        <taxon>Vibrionales</taxon>
        <taxon>Vibrionaceae</taxon>
        <taxon>Vibrio</taxon>
    </lineage>
</organism>
<evidence type="ECO:0000255" key="1">
    <source>
        <dbReference type="HAMAP-Rule" id="MF_01708"/>
    </source>
</evidence>
<reference key="1">
    <citation type="journal article" date="2000" name="Nature">
        <title>DNA sequence of both chromosomes of the cholera pathogen Vibrio cholerae.</title>
        <authorList>
            <person name="Heidelberg J.F."/>
            <person name="Eisen J.A."/>
            <person name="Nelson W.C."/>
            <person name="Clayton R.A."/>
            <person name="Gwinn M.L."/>
            <person name="Dodson R.J."/>
            <person name="Haft D.H."/>
            <person name="Hickey E.K."/>
            <person name="Peterson J.D."/>
            <person name="Umayam L.A."/>
            <person name="Gill S.R."/>
            <person name="Nelson K.E."/>
            <person name="Read T.D."/>
            <person name="Tettelin H."/>
            <person name="Richardson D.L."/>
            <person name="Ermolaeva M.D."/>
            <person name="Vamathevan J.J."/>
            <person name="Bass S."/>
            <person name="Qin H."/>
            <person name="Dragoi I."/>
            <person name="Sellers P."/>
            <person name="McDonald L.A."/>
            <person name="Utterback T.R."/>
            <person name="Fleischmann R.D."/>
            <person name="Nierman W.C."/>
            <person name="White O."/>
            <person name="Salzberg S.L."/>
            <person name="Smith H.O."/>
            <person name="Colwell R.R."/>
            <person name="Mekalanos J.J."/>
            <person name="Venter J.C."/>
            <person name="Fraser C.M."/>
        </authorList>
    </citation>
    <scope>NUCLEOTIDE SEQUENCE [LARGE SCALE GENOMIC DNA]</scope>
    <source>
        <strain>ATCC 39315 / El Tor Inaba N16961</strain>
    </source>
</reference>
<name>LOLD_VIBCH</name>
<proteinExistence type="inferred from homology"/>
<protein>
    <recommendedName>
        <fullName evidence="1">Lipoprotein-releasing system ATP-binding protein LolD</fullName>
        <ecNumber evidence="1">7.6.2.-</ecNumber>
    </recommendedName>
</protein>
<dbReference type="EC" id="7.6.2.-" evidence="1"/>
<dbReference type="EMBL" id="AE003852">
    <property type="protein sequence ID" value="AAF95031.1"/>
    <property type="molecule type" value="Genomic_DNA"/>
</dbReference>
<dbReference type="PIR" id="A82147">
    <property type="entry name" value="A82147"/>
</dbReference>
<dbReference type="RefSeq" id="NP_231517.1">
    <property type="nucleotide sequence ID" value="NC_002505.1"/>
</dbReference>
<dbReference type="RefSeq" id="WP_001061290.1">
    <property type="nucleotide sequence ID" value="NZ_LT906614.1"/>
</dbReference>
<dbReference type="SMR" id="P57066"/>
<dbReference type="STRING" id="243277.VC_1883"/>
<dbReference type="DNASU" id="2613637"/>
<dbReference type="EnsemblBacteria" id="AAF95031">
    <property type="protein sequence ID" value="AAF95031"/>
    <property type="gene ID" value="VC_1883"/>
</dbReference>
<dbReference type="GeneID" id="88782709"/>
<dbReference type="KEGG" id="vch:VC_1883"/>
<dbReference type="PATRIC" id="fig|243277.26.peg.1799"/>
<dbReference type="eggNOG" id="COG1136">
    <property type="taxonomic scope" value="Bacteria"/>
</dbReference>
<dbReference type="HOGENOM" id="CLU_000604_1_22_6"/>
<dbReference type="Proteomes" id="UP000000584">
    <property type="component" value="Chromosome 1"/>
</dbReference>
<dbReference type="GO" id="GO:0005886">
    <property type="term" value="C:plasma membrane"/>
    <property type="evidence" value="ECO:0000318"/>
    <property type="project" value="GO_Central"/>
</dbReference>
<dbReference type="GO" id="GO:0005524">
    <property type="term" value="F:ATP binding"/>
    <property type="evidence" value="ECO:0007669"/>
    <property type="project" value="UniProtKB-KW"/>
</dbReference>
<dbReference type="GO" id="GO:0016887">
    <property type="term" value="F:ATP hydrolysis activity"/>
    <property type="evidence" value="ECO:0007669"/>
    <property type="project" value="InterPro"/>
</dbReference>
<dbReference type="GO" id="GO:0022857">
    <property type="term" value="F:transmembrane transporter activity"/>
    <property type="evidence" value="ECO:0000318"/>
    <property type="project" value="GO_Central"/>
</dbReference>
<dbReference type="GO" id="GO:0044874">
    <property type="term" value="P:lipoprotein localization to outer membrane"/>
    <property type="evidence" value="ECO:0000318"/>
    <property type="project" value="GO_Central"/>
</dbReference>
<dbReference type="GO" id="GO:0089705">
    <property type="term" value="P:protein localization to outer membrane"/>
    <property type="evidence" value="ECO:0000318"/>
    <property type="project" value="GO_Central"/>
</dbReference>
<dbReference type="GO" id="GO:0055085">
    <property type="term" value="P:transmembrane transport"/>
    <property type="evidence" value="ECO:0000318"/>
    <property type="project" value="GO_Central"/>
</dbReference>
<dbReference type="CDD" id="cd03255">
    <property type="entry name" value="ABC_MJ0796_LolCDE_FtsE"/>
    <property type="match status" value="1"/>
</dbReference>
<dbReference type="FunFam" id="3.40.50.300:FF:000230">
    <property type="entry name" value="Lipoprotein-releasing system ATP-binding protein LolD"/>
    <property type="match status" value="1"/>
</dbReference>
<dbReference type="Gene3D" id="3.40.50.300">
    <property type="entry name" value="P-loop containing nucleotide triphosphate hydrolases"/>
    <property type="match status" value="1"/>
</dbReference>
<dbReference type="InterPro" id="IPR003593">
    <property type="entry name" value="AAA+_ATPase"/>
</dbReference>
<dbReference type="InterPro" id="IPR003439">
    <property type="entry name" value="ABC_transporter-like_ATP-bd"/>
</dbReference>
<dbReference type="InterPro" id="IPR017871">
    <property type="entry name" value="ABC_transporter-like_CS"/>
</dbReference>
<dbReference type="InterPro" id="IPR011924">
    <property type="entry name" value="LolD_lipo_ATP-bd"/>
</dbReference>
<dbReference type="InterPro" id="IPR017911">
    <property type="entry name" value="MacB-like_ATP-bd"/>
</dbReference>
<dbReference type="InterPro" id="IPR027417">
    <property type="entry name" value="P-loop_NTPase"/>
</dbReference>
<dbReference type="NCBIfam" id="TIGR02211">
    <property type="entry name" value="LolD_lipo_ex"/>
    <property type="match status" value="1"/>
</dbReference>
<dbReference type="PANTHER" id="PTHR42798:SF2">
    <property type="entry name" value="ABC TRANSPORTER ATP-BINDING PROTEIN MG467-RELATED"/>
    <property type="match status" value="1"/>
</dbReference>
<dbReference type="PANTHER" id="PTHR42798">
    <property type="entry name" value="LIPOPROTEIN-RELEASING SYSTEM ATP-BINDING PROTEIN LOLD"/>
    <property type="match status" value="1"/>
</dbReference>
<dbReference type="Pfam" id="PF00005">
    <property type="entry name" value="ABC_tran"/>
    <property type="match status" value="1"/>
</dbReference>
<dbReference type="SMART" id="SM00382">
    <property type="entry name" value="AAA"/>
    <property type="match status" value="1"/>
</dbReference>
<dbReference type="SUPFAM" id="SSF52540">
    <property type="entry name" value="P-loop containing nucleoside triphosphate hydrolases"/>
    <property type="match status" value="1"/>
</dbReference>
<dbReference type="PROSITE" id="PS00211">
    <property type="entry name" value="ABC_TRANSPORTER_1"/>
    <property type="match status" value="1"/>
</dbReference>
<dbReference type="PROSITE" id="PS50893">
    <property type="entry name" value="ABC_TRANSPORTER_2"/>
    <property type="match status" value="1"/>
</dbReference>
<dbReference type="PROSITE" id="PS51244">
    <property type="entry name" value="LOLD"/>
    <property type="match status" value="1"/>
</dbReference>
<gene>
    <name evidence="1" type="primary">lolD</name>
    <name type="ordered locus">VC_1883</name>
</gene>
<keyword id="KW-0067">ATP-binding</keyword>
<keyword id="KW-0997">Cell inner membrane</keyword>
<keyword id="KW-1003">Cell membrane</keyword>
<keyword id="KW-0472">Membrane</keyword>
<keyword id="KW-0547">Nucleotide-binding</keyword>
<keyword id="KW-1185">Reference proteome</keyword>
<keyword id="KW-1278">Translocase</keyword>
<keyword id="KW-0813">Transport</keyword>
<accession>P57066</accession>
<sequence length="228" mass="24891">MNNLLRCHQVCKTYQEGELQTQVLKGVSFELKRGELVSIIGSSGSGKSTLLHILGALDDASEGQVEFLGQSLHQLSSNKQAKIRNQHLGFVYQFHHLLADFSALENVAMPLLIGGMNVAKAKAKAQSLLERVGLGHRVAHRPSELSGGERQRVAIARALVNKPDLVLADEPTGNLDHKTALSIYDLMRELNRESGTAFLVVTHDGELAAKMDRHMHMKDGLLTDITGA</sequence>
<feature type="chain" id="PRO_0000092463" description="Lipoprotein-releasing system ATP-binding protein LolD">
    <location>
        <begin position="1"/>
        <end position="228"/>
    </location>
</feature>
<feature type="domain" description="ABC transporter" evidence="1">
    <location>
        <begin position="5"/>
        <end position="228"/>
    </location>
</feature>
<feature type="binding site" evidence="1">
    <location>
        <begin position="41"/>
        <end position="48"/>
    </location>
    <ligand>
        <name>ATP</name>
        <dbReference type="ChEBI" id="CHEBI:30616"/>
    </ligand>
</feature>